<dbReference type="EMBL" id="X66413">
    <property type="protein sequence ID" value="CAA47044.1"/>
    <property type="molecule type" value="mRNA"/>
</dbReference>
<dbReference type="PIR" id="S24989">
    <property type="entry name" value="S24989"/>
</dbReference>
<dbReference type="RefSeq" id="XP_001690923.1">
    <property type="nucleotide sequence ID" value="XM_001690871.1"/>
</dbReference>
<dbReference type="SMR" id="P45841"/>
<dbReference type="PaxDb" id="3055-EDP05369"/>
<dbReference type="KEGG" id="cre:CHLRE_12g489153v5"/>
<dbReference type="eggNOG" id="KOG0893">
    <property type="taxonomic scope" value="Eukaryota"/>
</dbReference>
<dbReference type="HOGENOM" id="CLU_112570_1_1_1"/>
<dbReference type="OrthoDB" id="9739313at2759"/>
<dbReference type="GO" id="GO:1990904">
    <property type="term" value="C:ribonucleoprotein complex"/>
    <property type="evidence" value="ECO:0007669"/>
    <property type="project" value="UniProtKB-KW"/>
</dbReference>
<dbReference type="GO" id="GO:0005840">
    <property type="term" value="C:ribosome"/>
    <property type="evidence" value="ECO:0007669"/>
    <property type="project" value="UniProtKB-KW"/>
</dbReference>
<dbReference type="GO" id="GO:0003735">
    <property type="term" value="F:structural constituent of ribosome"/>
    <property type="evidence" value="ECO:0007669"/>
    <property type="project" value="InterPro"/>
</dbReference>
<dbReference type="GO" id="GO:0006412">
    <property type="term" value="P:translation"/>
    <property type="evidence" value="ECO:0007669"/>
    <property type="project" value="InterPro"/>
</dbReference>
<dbReference type="CDD" id="cd00463">
    <property type="entry name" value="Ribosomal_L31e"/>
    <property type="match status" value="1"/>
</dbReference>
<dbReference type="FunFam" id="3.10.440.10:FF:000001">
    <property type="entry name" value="60S ribosomal protein L31"/>
    <property type="match status" value="1"/>
</dbReference>
<dbReference type="Gene3D" id="3.10.440.10">
    <property type="match status" value="1"/>
</dbReference>
<dbReference type="InterPro" id="IPR000054">
    <property type="entry name" value="Ribosomal_eL31"/>
</dbReference>
<dbReference type="InterPro" id="IPR020052">
    <property type="entry name" value="Ribosomal_eL31_CS"/>
</dbReference>
<dbReference type="InterPro" id="IPR023621">
    <property type="entry name" value="Ribosomal_eL31_dom_sf"/>
</dbReference>
<dbReference type="PANTHER" id="PTHR10956">
    <property type="entry name" value="60S RIBOSOMAL PROTEIN L31"/>
    <property type="match status" value="1"/>
</dbReference>
<dbReference type="PANTHER" id="PTHR10956:SF0">
    <property type="entry name" value="60S RIBOSOMAL PROTEIN L31"/>
    <property type="match status" value="1"/>
</dbReference>
<dbReference type="Pfam" id="PF01198">
    <property type="entry name" value="Ribosomal_L31e"/>
    <property type="match status" value="1"/>
</dbReference>
<dbReference type="SMART" id="SM01380">
    <property type="entry name" value="Ribosomal_L31e"/>
    <property type="match status" value="1"/>
</dbReference>
<dbReference type="SUPFAM" id="SSF54575">
    <property type="entry name" value="Ribosomal protein L31e"/>
    <property type="match status" value="1"/>
</dbReference>
<dbReference type="PROSITE" id="PS01144">
    <property type="entry name" value="RIBOSOMAL_L31E"/>
    <property type="match status" value="1"/>
</dbReference>
<feature type="chain" id="PRO_0000153778" description="Large ribosomal subunit protein eL31">
    <location>
        <begin position="1"/>
        <end position="116"/>
    </location>
</feature>
<reference key="1">
    <citation type="journal article" date="1993" name="Plant Sci.">
        <title>Isolation and characterization of cDNA sequences controlled by inorganic phosphate in Chlamydomonas reinhardtii.</title>
        <authorList>
            <person name="Dumont F."/>
            <person name="Joris B."/>
            <person name="Gumusboga A."/>
            <person name="Bruyninx M."/>
            <person name="Loppes R."/>
        </authorList>
    </citation>
    <scope>NUCLEOTIDE SEQUENCE [MRNA]</scope>
    <source>
        <strain>137c / CC-125</strain>
    </source>
</reference>
<comment type="similarity">
    <text evidence="1">Belongs to the eukaryotic ribosomal protein eL31 family.</text>
</comment>
<organism>
    <name type="scientific">Chlamydomonas reinhardtii</name>
    <name type="common">Chlamydomonas smithii</name>
    <dbReference type="NCBI Taxonomy" id="3055"/>
    <lineage>
        <taxon>Eukaryota</taxon>
        <taxon>Viridiplantae</taxon>
        <taxon>Chlorophyta</taxon>
        <taxon>core chlorophytes</taxon>
        <taxon>Chlorophyceae</taxon>
        <taxon>CS clade</taxon>
        <taxon>Chlamydomonadales</taxon>
        <taxon>Chlamydomonadaceae</taxon>
        <taxon>Chlamydomonas</taxon>
    </lineage>
</organism>
<proteinExistence type="inferred from homology"/>
<evidence type="ECO:0000305" key="1"/>
<accession>P45841</accession>
<sequence length="116" mass="13254">MAKDKSRSKEQVTREYTIHLSKRLHKTSFKKCAPKAVKEIRKFASKVMGTSDVRLDVKLNKAVWSKGIKNVPTRLRIVISRRRNDDEDAKEEMYSFVTVAEDQSTKGKGTVVVQDA</sequence>
<keyword id="KW-0687">Ribonucleoprotein</keyword>
<keyword id="KW-0689">Ribosomal protein</keyword>
<name>RL31_CHLRE</name>
<protein>
    <recommendedName>
        <fullName evidence="1">Large ribosomal subunit protein eL31</fullName>
    </recommendedName>
    <alternativeName>
        <fullName>60S ribosomal protein L31</fullName>
    </alternativeName>
</protein>
<gene>
    <name type="primary">RPL31</name>
</gene>